<gene>
    <name evidence="1" type="primary">ung</name>
    <name type="ordered locus">SG2631</name>
</gene>
<sequence>MATELTWHDVLADEKQQPYFINTLHTVAGERQSGITVYPPQKDVFNAFRFTELGDVKVVILGQDPYHGPGQAHGLAFSVRPGIAPPPSLVNMYKELEASIPGFVRPAHGYLESWARQGVLLLNTVLTVRAGQAHSHASLGWETFTDKVISLINQHREGVVFLLWGSHAQKKGAIIDPQRHHILKAPHPSPLSAHRGFFGCNHFALTNQWLEQHGEKTIDWTPVLPAESE</sequence>
<dbReference type="EC" id="3.2.2.27" evidence="1"/>
<dbReference type="EMBL" id="AM933173">
    <property type="protein sequence ID" value="CAR38448.1"/>
    <property type="molecule type" value="Genomic_DNA"/>
</dbReference>
<dbReference type="RefSeq" id="WP_000179978.1">
    <property type="nucleotide sequence ID" value="NC_011274.1"/>
</dbReference>
<dbReference type="SMR" id="B5RD62"/>
<dbReference type="KEGG" id="seg:SG2631"/>
<dbReference type="HOGENOM" id="CLU_032162_3_0_6"/>
<dbReference type="Proteomes" id="UP000008321">
    <property type="component" value="Chromosome"/>
</dbReference>
<dbReference type="GO" id="GO:0005737">
    <property type="term" value="C:cytoplasm"/>
    <property type="evidence" value="ECO:0007669"/>
    <property type="project" value="UniProtKB-SubCell"/>
</dbReference>
<dbReference type="GO" id="GO:0004844">
    <property type="term" value="F:uracil DNA N-glycosylase activity"/>
    <property type="evidence" value="ECO:0007669"/>
    <property type="project" value="UniProtKB-UniRule"/>
</dbReference>
<dbReference type="GO" id="GO:0097510">
    <property type="term" value="P:base-excision repair, AP site formation via deaminated base removal"/>
    <property type="evidence" value="ECO:0007669"/>
    <property type="project" value="TreeGrafter"/>
</dbReference>
<dbReference type="CDD" id="cd10027">
    <property type="entry name" value="UDG-F1-like"/>
    <property type="match status" value="1"/>
</dbReference>
<dbReference type="FunFam" id="3.40.470.10:FF:000001">
    <property type="entry name" value="Uracil-DNA glycosylase"/>
    <property type="match status" value="1"/>
</dbReference>
<dbReference type="Gene3D" id="3.40.470.10">
    <property type="entry name" value="Uracil-DNA glycosylase-like domain"/>
    <property type="match status" value="1"/>
</dbReference>
<dbReference type="HAMAP" id="MF_00148">
    <property type="entry name" value="UDG"/>
    <property type="match status" value="1"/>
</dbReference>
<dbReference type="InterPro" id="IPR002043">
    <property type="entry name" value="UDG_fam1"/>
</dbReference>
<dbReference type="InterPro" id="IPR018085">
    <property type="entry name" value="Ura-DNA_Glyclase_AS"/>
</dbReference>
<dbReference type="InterPro" id="IPR005122">
    <property type="entry name" value="Uracil-DNA_glycosylase-like"/>
</dbReference>
<dbReference type="InterPro" id="IPR036895">
    <property type="entry name" value="Uracil-DNA_glycosylase-like_sf"/>
</dbReference>
<dbReference type="NCBIfam" id="NF003588">
    <property type="entry name" value="PRK05254.1-1"/>
    <property type="match status" value="1"/>
</dbReference>
<dbReference type="NCBIfam" id="NF003589">
    <property type="entry name" value="PRK05254.1-2"/>
    <property type="match status" value="1"/>
</dbReference>
<dbReference type="NCBIfam" id="NF003591">
    <property type="entry name" value="PRK05254.1-4"/>
    <property type="match status" value="1"/>
</dbReference>
<dbReference type="NCBIfam" id="NF003592">
    <property type="entry name" value="PRK05254.1-5"/>
    <property type="match status" value="1"/>
</dbReference>
<dbReference type="NCBIfam" id="TIGR00628">
    <property type="entry name" value="ung"/>
    <property type="match status" value="1"/>
</dbReference>
<dbReference type="PANTHER" id="PTHR11264">
    <property type="entry name" value="URACIL-DNA GLYCOSYLASE"/>
    <property type="match status" value="1"/>
</dbReference>
<dbReference type="PANTHER" id="PTHR11264:SF0">
    <property type="entry name" value="URACIL-DNA GLYCOSYLASE"/>
    <property type="match status" value="1"/>
</dbReference>
<dbReference type="Pfam" id="PF03167">
    <property type="entry name" value="UDG"/>
    <property type="match status" value="1"/>
</dbReference>
<dbReference type="SMART" id="SM00986">
    <property type="entry name" value="UDG"/>
    <property type="match status" value="1"/>
</dbReference>
<dbReference type="SMART" id="SM00987">
    <property type="entry name" value="UreE_C"/>
    <property type="match status" value="1"/>
</dbReference>
<dbReference type="SUPFAM" id="SSF52141">
    <property type="entry name" value="Uracil-DNA glycosylase-like"/>
    <property type="match status" value="1"/>
</dbReference>
<dbReference type="PROSITE" id="PS00130">
    <property type="entry name" value="U_DNA_GLYCOSYLASE"/>
    <property type="match status" value="1"/>
</dbReference>
<reference key="1">
    <citation type="journal article" date="2008" name="Genome Res.">
        <title>Comparative genome analysis of Salmonella enteritidis PT4 and Salmonella gallinarum 287/91 provides insights into evolutionary and host adaptation pathways.</title>
        <authorList>
            <person name="Thomson N.R."/>
            <person name="Clayton D.J."/>
            <person name="Windhorst D."/>
            <person name="Vernikos G."/>
            <person name="Davidson S."/>
            <person name="Churcher C."/>
            <person name="Quail M.A."/>
            <person name="Stevens M."/>
            <person name="Jones M.A."/>
            <person name="Watson M."/>
            <person name="Barron A."/>
            <person name="Layton A."/>
            <person name="Pickard D."/>
            <person name="Kingsley R.A."/>
            <person name="Bignell A."/>
            <person name="Clark L."/>
            <person name="Harris B."/>
            <person name="Ormond D."/>
            <person name="Abdellah Z."/>
            <person name="Brooks K."/>
            <person name="Cherevach I."/>
            <person name="Chillingworth T."/>
            <person name="Woodward J."/>
            <person name="Norberczak H."/>
            <person name="Lord A."/>
            <person name="Arrowsmith C."/>
            <person name="Jagels K."/>
            <person name="Moule S."/>
            <person name="Mungall K."/>
            <person name="Saunders M."/>
            <person name="Whitehead S."/>
            <person name="Chabalgoity J.A."/>
            <person name="Maskell D."/>
            <person name="Humphreys T."/>
            <person name="Roberts M."/>
            <person name="Barrow P.A."/>
            <person name="Dougan G."/>
            <person name="Parkhill J."/>
        </authorList>
    </citation>
    <scope>NUCLEOTIDE SEQUENCE [LARGE SCALE GENOMIC DNA]</scope>
    <source>
        <strain>287/91 / NCTC 13346</strain>
    </source>
</reference>
<proteinExistence type="inferred from homology"/>
<name>UNG_SALG2</name>
<keyword id="KW-0963">Cytoplasm</keyword>
<keyword id="KW-0227">DNA damage</keyword>
<keyword id="KW-0234">DNA repair</keyword>
<keyword id="KW-0378">Hydrolase</keyword>
<organism>
    <name type="scientific">Salmonella gallinarum (strain 287/91 / NCTC 13346)</name>
    <dbReference type="NCBI Taxonomy" id="550538"/>
    <lineage>
        <taxon>Bacteria</taxon>
        <taxon>Pseudomonadati</taxon>
        <taxon>Pseudomonadota</taxon>
        <taxon>Gammaproteobacteria</taxon>
        <taxon>Enterobacterales</taxon>
        <taxon>Enterobacteriaceae</taxon>
        <taxon>Salmonella</taxon>
    </lineage>
</organism>
<accession>B5RD62</accession>
<comment type="function">
    <text evidence="1">Excises uracil residues from the DNA which can arise as a result of misincorporation of dUMP residues by DNA polymerase or due to deamination of cytosine.</text>
</comment>
<comment type="catalytic activity">
    <reaction evidence="1">
        <text>Hydrolyzes single-stranded DNA or mismatched double-stranded DNA and polynucleotides, releasing free uracil.</text>
        <dbReference type="EC" id="3.2.2.27"/>
    </reaction>
</comment>
<comment type="subcellular location">
    <subcellularLocation>
        <location evidence="1">Cytoplasm</location>
    </subcellularLocation>
</comment>
<comment type="similarity">
    <text evidence="1">Belongs to the uracil-DNA glycosylase (UDG) superfamily. UNG family.</text>
</comment>
<feature type="chain" id="PRO_1000096604" description="Uracil-DNA glycosylase">
    <location>
        <begin position="1"/>
        <end position="229"/>
    </location>
</feature>
<feature type="active site" description="Proton acceptor" evidence="1">
    <location>
        <position position="64"/>
    </location>
</feature>
<evidence type="ECO:0000255" key="1">
    <source>
        <dbReference type="HAMAP-Rule" id="MF_00148"/>
    </source>
</evidence>
<protein>
    <recommendedName>
        <fullName evidence="1">Uracil-DNA glycosylase</fullName>
        <shortName evidence="1">UDG</shortName>
        <ecNumber evidence="1">3.2.2.27</ecNumber>
    </recommendedName>
</protein>